<sequence length="114" mass="13511">MRTLLIGMIWVYQKVISPLKRPTCRYYPSCSEYALWLFSYSNFWYALLFSLRRILRCNSLFEGGIDYPIISKRITPIFGSPRLIKVWLVPLCPQKDWSAKGKFYLIKSMKVVQC</sequence>
<gene>
    <name type="ordered locus">WS1287</name>
</gene>
<organism>
    <name type="scientific">Wolinella succinogenes (strain ATCC 29543 / DSM 1740 / CCUG 13145 / JCM 31913 / LMG 7466 / NCTC 11488 / FDC 602W)</name>
    <name type="common">Vibrio succinogenes</name>
    <dbReference type="NCBI Taxonomy" id="273121"/>
    <lineage>
        <taxon>Bacteria</taxon>
        <taxon>Pseudomonadati</taxon>
        <taxon>Campylobacterota</taxon>
        <taxon>Epsilonproteobacteria</taxon>
        <taxon>Campylobacterales</taxon>
        <taxon>Helicobacteraceae</taxon>
        <taxon>Wolinella</taxon>
    </lineage>
</organism>
<comment type="function">
    <text evidence="1">Could be involved in insertion of integral membrane proteins into the membrane.</text>
</comment>
<comment type="subcellular location">
    <subcellularLocation>
        <location evidence="1">Cell inner membrane</location>
        <topology evidence="1">Peripheral membrane protein</topology>
        <orientation evidence="1">Cytoplasmic side</orientation>
    </subcellularLocation>
</comment>
<comment type="similarity">
    <text evidence="1">Belongs to the UPF0161 family.</text>
</comment>
<name>YIDD_WOLSU</name>
<accession>Q7MRJ7</accession>
<feature type="chain" id="PRO_0000171896" description="Putative membrane protein insertion efficiency factor">
    <location>
        <begin position="1"/>
        <end position="114"/>
    </location>
</feature>
<reference key="1">
    <citation type="journal article" date="2003" name="Proc. Natl. Acad. Sci. U.S.A.">
        <title>Complete genome sequence and analysis of Wolinella succinogenes.</title>
        <authorList>
            <person name="Baar C."/>
            <person name="Eppinger M."/>
            <person name="Raddatz G."/>
            <person name="Simon J."/>
            <person name="Lanz C."/>
            <person name="Klimmek O."/>
            <person name="Nandakumar R."/>
            <person name="Gross R."/>
            <person name="Rosinus A."/>
            <person name="Keller H."/>
            <person name="Jagtap P."/>
            <person name="Linke B."/>
            <person name="Meyer F."/>
            <person name="Lederer H."/>
            <person name="Schuster S.C."/>
        </authorList>
    </citation>
    <scope>NUCLEOTIDE SEQUENCE [LARGE SCALE GENOMIC DNA]</scope>
    <source>
        <strain>ATCC 29543 / DSM 1740 / CCUG 13145 / JCM 31913 / LMG 7466 / NCTC 11488 / FDC 602W</strain>
    </source>
</reference>
<evidence type="ECO:0000255" key="1">
    <source>
        <dbReference type="HAMAP-Rule" id="MF_00386"/>
    </source>
</evidence>
<proteinExistence type="inferred from homology"/>
<dbReference type="EMBL" id="BX571660">
    <property type="protein sequence ID" value="CAE10366.1"/>
    <property type="molecule type" value="Genomic_DNA"/>
</dbReference>
<dbReference type="RefSeq" id="WP_011139152.1">
    <property type="nucleotide sequence ID" value="NC_005090.1"/>
</dbReference>
<dbReference type="STRING" id="273121.WS1287"/>
<dbReference type="KEGG" id="wsu:WS1287"/>
<dbReference type="eggNOG" id="COG0759">
    <property type="taxonomic scope" value="Bacteria"/>
</dbReference>
<dbReference type="HOGENOM" id="CLU_144811_4_0_7"/>
<dbReference type="Proteomes" id="UP000000422">
    <property type="component" value="Chromosome"/>
</dbReference>
<dbReference type="GO" id="GO:0005886">
    <property type="term" value="C:plasma membrane"/>
    <property type="evidence" value="ECO:0007669"/>
    <property type="project" value="UniProtKB-SubCell"/>
</dbReference>
<dbReference type="HAMAP" id="MF_00386">
    <property type="entry name" value="UPF0161_YidD"/>
    <property type="match status" value="1"/>
</dbReference>
<dbReference type="InterPro" id="IPR002696">
    <property type="entry name" value="Membr_insert_effic_factor_YidD"/>
</dbReference>
<dbReference type="NCBIfam" id="TIGR00278">
    <property type="entry name" value="membrane protein insertion efficiency factor YidD"/>
    <property type="match status" value="1"/>
</dbReference>
<dbReference type="PANTHER" id="PTHR33383">
    <property type="entry name" value="MEMBRANE PROTEIN INSERTION EFFICIENCY FACTOR-RELATED"/>
    <property type="match status" value="1"/>
</dbReference>
<dbReference type="PANTHER" id="PTHR33383:SF1">
    <property type="entry name" value="MEMBRANE PROTEIN INSERTION EFFICIENCY FACTOR-RELATED"/>
    <property type="match status" value="1"/>
</dbReference>
<dbReference type="Pfam" id="PF01809">
    <property type="entry name" value="YidD"/>
    <property type="match status" value="1"/>
</dbReference>
<dbReference type="SMART" id="SM01234">
    <property type="entry name" value="Haemolytic"/>
    <property type="match status" value="1"/>
</dbReference>
<protein>
    <recommendedName>
        <fullName evidence="1">Putative membrane protein insertion efficiency factor</fullName>
    </recommendedName>
</protein>
<keyword id="KW-0997">Cell inner membrane</keyword>
<keyword id="KW-1003">Cell membrane</keyword>
<keyword id="KW-0472">Membrane</keyword>
<keyword id="KW-1185">Reference proteome</keyword>